<comment type="function">
    <text evidence="1">Orphan receptor involved in cell adhesion and probably in cell-cell interactions specifically involving cells of the immune system. May play a role in regulatory T-cells (Treg) development.</text>
</comment>
<comment type="subcellular location">
    <subcellularLocation>
        <location evidence="9">Cell membrane</location>
        <topology evidence="2">Multi-pass membrane protein</topology>
    </subcellularLocation>
</comment>
<comment type="alternative products">
    <event type="alternative splicing"/>
    <isoform>
        <id>Q14246-1</id>
        <name>1</name>
        <sequence type="displayed"/>
    </isoform>
    <isoform>
        <id>Q14246-2</id>
        <name>2</name>
        <sequence type="described" ref="VSP_009594"/>
    </isoform>
    <isoform>
        <id>Q14246-3</id>
        <name>3</name>
        <sequence type="described" ref="VSP_045521 VSP_045524"/>
    </isoform>
    <isoform>
        <id>Q14246-4</id>
        <name>4</name>
        <sequence type="described" ref="VSP_045523"/>
    </isoform>
    <isoform>
        <id>Q14246-5</id>
        <name>5</name>
        <sequence type="described" ref="VSP_045521 VSP_045522"/>
    </isoform>
    <text>Comment=Additional isoforms seem to exist.</text>
</comment>
<comment type="tissue specificity">
    <text evidence="8 9">Expression is restricted to eosinophils.</text>
</comment>
<comment type="miscellaneous">
    <text evidence="15">Most adhesion GPCRs proteins undergo autoproteolysis at the GPS region of the GAIN-B domain. ADGRE1 is predicted non-cleavable because of the lack of a consensus catalytic triad sequence within GPS region.</text>
</comment>
<comment type="similarity">
    <text evidence="15">Belongs to the G-protein coupled receptor 2 family. Adhesion G-protein coupled receptor (ADGR) subfamily.</text>
</comment>
<comment type="sequence caution" evidence="15">
    <conflict type="erroneous gene model prediction">
        <sequence resource="EMBL-CDS" id="BAC06133"/>
    </conflict>
</comment>
<dbReference type="EMBL" id="X81479">
    <property type="protein sequence ID" value="CAA57232.1"/>
    <property type="molecule type" value="mRNA"/>
</dbReference>
<dbReference type="EMBL" id="AB065918">
    <property type="protein sequence ID" value="BAC06133.1"/>
    <property type="status" value="ALT_SEQ"/>
    <property type="molecule type" value="Genomic_DNA"/>
</dbReference>
<dbReference type="EMBL" id="DQ217942">
    <property type="protein sequence ID" value="ABB70739.1"/>
    <property type="molecule type" value="Genomic_DNA"/>
</dbReference>
<dbReference type="EMBL" id="AK131562">
    <property type="protein sequence ID" value="BAD18695.1"/>
    <property type="molecule type" value="mRNA"/>
</dbReference>
<dbReference type="EMBL" id="AK297003">
    <property type="protein sequence ID" value="BAH12472.1"/>
    <property type="molecule type" value="mRNA"/>
</dbReference>
<dbReference type="EMBL" id="AK297011">
    <property type="protein sequence ID" value="BAH12475.1"/>
    <property type="molecule type" value="mRNA"/>
</dbReference>
<dbReference type="EMBL" id="AC020895">
    <property type="status" value="NOT_ANNOTATED_CDS"/>
    <property type="molecule type" value="Genomic_DNA"/>
</dbReference>
<dbReference type="EMBL" id="AC025278">
    <property type="status" value="NOT_ANNOTATED_CDS"/>
    <property type="molecule type" value="Genomic_DNA"/>
</dbReference>
<dbReference type="EMBL" id="BC059395">
    <property type="protein sequence ID" value="AAH59395.1"/>
    <property type="molecule type" value="mRNA"/>
</dbReference>
<dbReference type="CCDS" id="CCDS12175.1">
    <molecule id="Q14246-1"/>
</dbReference>
<dbReference type="CCDS" id="CCDS58643.1">
    <molecule id="Q14246-4"/>
</dbReference>
<dbReference type="CCDS" id="CCDS58644.1">
    <molecule id="Q14246-2"/>
</dbReference>
<dbReference type="CCDS" id="CCDS58645.1">
    <molecule id="Q14246-3"/>
</dbReference>
<dbReference type="CCDS" id="CCDS58646.1">
    <molecule id="Q14246-5"/>
</dbReference>
<dbReference type="PIR" id="A57172">
    <property type="entry name" value="A57172"/>
</dbReference>
<dbReference type="RefSeq" id="NP_001243181.1">
    <molecule id="Q14246-3"/>
    <property type="nucleotide sequence ID" value="NM_001256252.2"/>
</dbReference>
<dbReference type="RefSeq" id="NP_001243182.1">
    <molecule id="Q14246-2"/>
    <property type="nucleotide sequence ID" value="NM_001256253.2"/>
</dbReference>
<dbReference type="RefSeq" id="NP_001243183.1">
    <molecule id="Q14246-5"/>
    <property type="nucleotide sequence ID" value="NM_001256254.2"/>
</dbReference>
<dbReference type="RefSeq" id="NP_001243184.1">
    <molecule id="Q14246-4"/>
    <property type="nucleotide sequence ID" value="NM_001256255.2"/>
</dbReference>
<dbReference type="RefSeq" id="NP_001965.3">
    <molecule id="Q14246-1"/>
    <property type="nucleotide sequence ID" value="NM_001974.4"/>
</dbReference>
<dbReference type="SMR" id="Q14246"/>
<dbReference type="FunCoup" id="Q14246">
    <property type="interactions" value="136"/>
</dbReference>
<dbReference type="IntAct" id="Q14246">
    <property type="interactions" value="1"/>
</dbReference>
<dbReference type="STRING" id="9606.ENSP00000311545"/>
<dbReference type="TCDB" id="9.A.14.6.1">
    <property type="family name" value="the g-protein-coupled receptor (gpcr) family"/>
</dbReference>
<dbReference type="GlyCosmos" id="Q14246">
    <property type="glycosylation" value="12 sites, No reported glycans"/>
</dbReference>
<dbReference type="GlyGen" id="Q14246">
    <property type="glycosylation" value="12 sites"/>
</dbReference>
<dbReference type="iPTMnet" id="Q14246"/>
<dbReference type="PhosphoSitePlus" id="Q14246"/>
<dbReference type="BioMuta" id="ADGRE1"/>
<dbReference type="DMDM" id="290457673"/>
<dbReference type="MassIVE" id="Q14246"/>
<dbReference type="PaxDb" id="9606-ENSP00000311545"/>
<dbReference type="PeptideAtlas" id="Q14246"/>
<dbReference type="ProteomicsDB" id="17463"/>
<dbReference type="ProteomicsDB" id="19583"/>
<dbReference type="ProteomicsDB" id="46230"/>
<dbReference type="ProteomicsDB" id="59945">
    <molecule id="Q14246-1"/>
</dbReference>
<dbReference type="ProteomicsDB" id="59946">
    <molecule id="Q14246-2"/>
</dbReference>
<dbReference type="ABCD" id="Q14246">
    <property type="antibodies" value="11 sequenced antibodies"/>
</dbReference>
<dbReference type="Antibodypedia" id="11973">
    <property type="antibodies" value="765 antibodies from 43 providers"/>
</dbReference>
<dbReference type="DNASU" id="2015"/>
<dbReference type="Ensembl" id="ENST00000250572.12">
    <molecule id="Q14246-2"/>
    <property type="protein sequence ID" value="ENSP00000250572.7"/>
    <property type="gene ID" value="ENSG00000174837.15"/>
</dbReference>
<dbReference type="Ensembl" id="ENST00000312053.9">
    <molecule id="Q14246-1"/>
    <property type="protein sequence ID" value="ENSP00000311545.3"/>
    <property type="gene ID" value="ENSG00000174837.15"/>
</dbReference>
<dbReference type="Ensembl" id="ENST00000381404.8">
    <molecule id="Q14246-3"/>
    <property type="protein sequence ID" value="ENSP00000370811.4"/>
    <property type="gene ID" value="ENSG00000174837.15"/>
</dbReference>
<dbReference type="Ensembl" id="ENST00000381407.9">
    <molecule id="Q14246-5"/>
    <property type="protein sequence ID" value="ENSP00000370814.4"/>
    <property type="gene ID" value="ENSG00000174837.15"/>
</dbReference>
<dbReference type="Ensembl" id="ENST00000450315.7">
    <molecule id="Q14246-4"/>
    <property type="protein sequence ID" value="ENSP00000405974.2"/>
    <property type="gene ID" value="ENSG00000174837.15"/>
</dbReference>
<dbReference type="GeneID" id="2015"/>
<dbReference type="KEGG" id="hsa:2015"/>
<dbReference type="MANE-Select" id="ENST00000312053.9">
    <property type="protein sequence ID" value="ENSP00000311545.3"/>
    <property type="RefSeq nucleotide sequence ID" value="NM_001974.5"/>
    <property type="RefSeq protein sequence ID" value="NP_001965.3"/>
</dbReference>
<dbReference type="UCSC" id="uc002mfw.5">
    <molecule id="Q14246-1"/>
    <property type="organism name" value="human"/>
</dbReference>
<dbReference type="AGR" id="HGNC:3336"/>
<dbReference type="CTD" id="2015"/>
<dbReference type="DisGeNET" id="2015"/>
<dbReference type="GeneCards" id="ADGRE1"/>
<dbReference type="HGNC" id="HGNC:3336">
    <property type="gene designation" value="ADGRE1"/>
</dbReference>
<dbReference type="HPA" id="ENSG00000174837">
    <property type="expression patterns" value="Tissue enhanced (bone marrow, lymphoid tissue)"/>
</dbReference>
<dbReference type="MalaCards" id="ADGRE1"/>
<dbReference type="MIM" id="600493">
    <property type="type" value="gene"/>
</dbReference>
<dbReference type="neXtProt" id="NX_Q14246"/>
<dbReference type="OpenTargets" id="ENSG00000174837"/>
<dbReference type="PharmGKB" id="PA27773"/>
<dbReference type="VEuPathDB" id="HostDB:ENSG00000174837"/>
<dbReference type="eggNOG" id="KOG4193">
    <property type="taxonomic scope" value="Eukaryota"/>
</dbReference>
<dbReference type="GeneTree" id="ENSGT00940000161354"/>
<dbReference type="HOGENOM" id="CLU_002753_3_7_1"/>
<dbReference type="InParanoid" id="Q14246"/>
<dbReference type="OMA" id="PGRFICT"/>
<dbReference type="OrthoDB" id="1100386at2759"/>
<dbReference type="PAN-GO" id="Q14246">
    <property type="GO annotations" value="3 GO annotations based on evolutionary models"/>
</dbReference>
<dbReference type="PhylomeDB" id="Q14246"/>
<dbReference type="TreeFam" id="TF316380"/>
<dbReference type="PathwayCommons" id="Q14246"/>
<dbReference type="Reactome" id="R-HSA-373080">
    <property type="pathway name" value="Class B/2 (Secretin family receptors)"/>
</dbReference>
<dbReference type="SignaLink" id="Q14246"/>
<dbReference type="BioGRID-ORCS" id="2015">
    <property type="hits" value="9 hits in 1145 CRISPR screens"/>
</dbReference>
<dbReference type="ChiTaRS" id="ADGRE1">
    <property type="organism name" value="human"/>
</dbReference>
<dbReference type="GeneWiki" id="EMR1"/>
<dbReference type="GenomeRNAi" id="2015"/>
<dbReference type="Pharos" id="Q14246">
    <property type="development level" value="Tbio"/>
</dbReference>
<dbReference type="PRO" id="PR:Q14246"/>
<dbReference type="Proteomes" id="UP000005640">
    <property type="component" value="Chromosome 19"/>
</dbReference>
<dbReference type="RNAct" id="Q14246">
    <property type="molecule type" value="protein"/>
</dbReference>
<dbReference type="Bgee" id="ENSG00000174837">
    <property type="expression patterns" value="Expressed in monocyte and 105 other cell types or tissues"/>
</dbReference>
<dbReference type="ExpressionAtlas" id="Q14246">
    <property type="expression patterns" value="baseline and differential"/>
</dbReference>
<dbReference type="GO" id="GO:0009897">
    <property type="term" value="C:external side of plasma membrane"/>
    <property type="evidence" value="ECO:0007669"/>
    <property type="project" value="Ensembl"/>
</dbReference>
<dbReference type="GO" id="GO:0005886">
    <property type="term" value="C:plasma membrane"/>
    <property type="evidence" value="ECO:0000318"/>
    <property type="project" value="GO_Central"/>
</dbReference>
<dbReference type="GO" id="GO:0005509">
    <property type="term" value="F:calcium ion binding"/>
    <property type="evidence" value="ECO:0007669"/>
    <property type="project" value="InterPro"/>
</dbReference>
<dbReference type="GO" id="GO:0004930">
    <property type="term" value="F:G protein-coupled receptor activity"/>
    <property type="evidence" value="ECO:0000318"/>
    <property type="project" value="GO_Central"/>
</dbReference>
<dbReference type="GO" id="GO:0002250">
    <property type="term" value="P:adaptive immune response"/>
    <property type="evidence" value="ECO:0007669"/>
    <property type="project" value="UniProtKB-KW"/>
</dbReference>
<dbReference type="GO" id="GO:0007189">
    <property type="term" value="P:adenylate cyclase-activating G protein-coupled receptor signaling pathway"/>
    <property type="evidence" value="ECO:0000318"/>
    <property type="project" value="GO_Central"/>
</dbReference>
<dbReference type="GO" id="GO:0007155">
    <property type="term" value="P:cell adhesion"/>
    <property type="evidence" value="ECO:0000304"/>
    <property type="project" value="ProtInc"/>
</dbReference>
<dbReference type="GO" id="GO:0007166">
    <property type="term" value="P:cell surface receptor signaling pathway"/>
    <property type="evidence" value="ECO:0007669"/>
    <property type="project" value="InterPro"/>
</dbReference>
<dbReference type="GO" id="GO:0007186">
    <property type="term" value="P:G protein-coupled receptor signaling pathway"/>
    <property type="evidence" value="ECO:0000304"/>
    <property type="project" value="ProtInc"/>
</dbReference>
<dbReference type="CDD" id="cd15439">
    <property type="entry name" value="7tmB2_EMR"/>
    <property type="match status" value="1"/>
</dbReference>
<dbReference type="CDD" id="cd00054">
    <property type="entry name" value="EGF_CA"/>
    <property type="match status" value="6"/>
</dbReference>
<dbReference type="FunFam" id="2.10.25.10:FF:000243">
    <property type="entry name" value="Adhesion G protein-coupled receptor E1"/>
    <property type="match status" value="2"/>
</dbReference>
<dbReference type="FunFam" id="2.10.25.10:FF:000453">
    <property type="entry name" value="Adhesion G protein-coupled receptor E1"/>
    <property type="match status" value="1"/>
</dbReference>
<dbReference type="FunFam" id="2.10.25.10:FF:000462">
    <property type="entry name" value="Adhesion G protein-coupled receptor E1"/>
    <property type="match status" value="1"/>
</dbReference>
<dbReference type="FunFam" id="2.10.25.10:FF:000464">
    <property type="entry name" value="Adhesion G protein-coupled receptor E1"/>
    <property type="match status" value="1"/>
</dbReference>
<dbReference type="FunFam" id="2.10.25.10:FF:000506">
    <property type="entry name" value="Adhesion G protein-coupled receptor E1"/>
    <property type="match status" value="1"/>
</dbReference>
<dbReference type="FunFam" id="2.60.220.50:FF:000013">
    <property type="entry name" value="Adhesion G protein-coupled receptor E1"/>
    <property type="match status" value="1"/>
</dbReference>
<dbReference type="FunFam" id="1.20.1070.10:FF:000054">
    <property type="entry name" value="Adhesion G protein-coupled receptor E3"/>
    <property type="match status" value="1"/>
</dbReference>
<dbReference type="Gene3D" id="2.60.220.50">
    <property type="match status" value="1"/>
</dbReference>
<dbReference type="Gene3D" id="2.10.25.10">
    <property type="entry name" value="Laminin"/>
    <property type="match status" value="6"/>
</dbReference>
<dbReference type="Gene3D" id="1.20.1070.10">
    <property type="entry name" value="Rhodopsin 7-helix transmembrane proteins"/>
    <property type="match status" value="1"/>
</dbReference>
<dbReference type="InterPro" id="IPR001881">
    <property type="entry name" value="EGF-like_Ca-bd_dom"/>
</dbReference>
<dbReference type="InterPro" id="IPR000742">
    <property type="entry name" value="EGF-like_dom"/>
</dbReference>
<dbReference type="InterPro" id="IPR000152">
    <property type="entry name" value="EGF-type_Asp/Asn_hydroxyl_site"/>
</dbReference>
<dbReference type="InterPro" id="IPR018097">
    <property type="entry name" value="EGF_Ca-bd_CS"/>
</dbReference>
<dbReference type="InterPro" id="IPR057244">
    <property type="entry name" value="GAIN_B"/>
</dbReference>
<dbReference type="InterPro" id="IPR046338">
    <property type="entry name" value="GAIN_dom_sf"/>
</dbReference>
<dbReference type="InterPro" id="IPR017981">
    <property type="entry name" value="GPCR_2-like_7TM"/>
</dbReference>
<dbReference type="InterPro" id="IPR001740">
    <property type="entry name" value="GPCR_2_EMR1-like_rcpt"/>
</dbReference>
<dbReference type="InterPro" id="IPR000832">
    <property type="entry name" value="GPCR_2_secretin-like"/>
</dbReference>
<dbReference type="InterPro" id="IPR017983">
    <property type="entry name" value="GPCR_2_secretin-like_CS"/>
</dbReference>
<dbReference type="InterPro" id="IPR000203">
    <property type="entry name" value="GPS"/>
</dbReference>
<dbReference type="InterPro" id="IPR009030">
    <property type="entry name" value="Growth_fac_rcpt_cys_sf"/>
</dbReference>
<dbReference type="InterPro" id="IPR049883">
    <property type="entry name" value="NOTCH1_EGF-like"/>
</dbReference>
<dbReference type="PANTHER" id="PTHR12011:SF449">
    <property type="entry name" value="ADHESION G PROTEIN-COUPLED RECEPTOR E1"/>
    <property type="match status" value="1"/>
</dbReference>
<dbReference type="PANTHER" id="PTHR12011">
    <property type="entry name" value="ADHESION G-PROTEIN COUPLED RECEPTOR"/>
    <property type="match status" value="1"/>
</dbReference>
<dbReference type="Pfam" id="PF00002">
    <property type="entry name" value="7tm_2"/>
    <property type="match status" value="1"/>
</dbReference>
<dbReference type="Pfam" id="PF07645">
    <property type="entry name" value="EGF_CA"/>
    <property type="match status" value="6"/>
</dbReference>
<dbReference type="Pfam" id="PF01825">
    <property type="entry name" value="GPS"/>
    <property type="match status" value="1"/>
</dbReference>
<dbReference type="PRINTS" id="PR01128">
    <property type="entry name" value="EMR1HORMONER"/>
</dbReference>
<dbReference type="PRINTS" id="PR00249">
    <property type="entry name" value="GPCRSECRETIN"/>
</dbReference>
<dbReference type="SMART" id="SM00181">
    <property type="entry name" value="EGF"/>
    <property type="match status" value="6"/>
</dbReference>
<dbReference type="SMART" id="SM00179">
    <property type="entry name" value="EGF_CA"/>
    <property type="match status" value="6"/>
</dbReference>
<dbReference type="SMART" id="SM00303">
    <property type="entry name" value="GPS"/>
    <property type="match status" value="1"/>
</dbReference>
<dbReference type="SUPFAM" id="SSF57196">
    <property type="entry name" value="EGF/Laminin"/>
    <property type="match status" value="3"/>
</dbReference>
<dbReference type="SUPFAM" id="SSF81321">
    <property type="entry name" value="Family A G protein-coupled receptor-like"/>
    <property type="match status" value="1"/>
</dbReference>
<dbReference type="SUPFAM" id="SSF57184">
    <property type="entry name" value="Growth factor receptor domain"/>
    <property type="match status" value="1"/>
</dbReference>
<dbReference type="PROSITE" id="PS00010">
    <property type="entry name" value="ASX_HYDROXYL"/>
    <property type="match status" value="6"/>
</dbReference>
<dbReference type="PROSITE" id="PS01186">
    <property type="entry name" value="EGF_2"/>
    <property type="match status" value="1"/>
</dbReference>
<dbReference type="PROSITE" id="PS50026">
    <property type="entry name" value="EGF_3"/>
    <property type="match status" value="6"/>
</dbReference>
<dbReference type="PROSITE" id="PS01187">
    <property type="entry name" value="EGF_CA"/>
    <property type="match status" value="5"/>
</dbReference>
<dbReference type="PROSITE" id="PS00650">
    <property type="entry name" value="G_PROTEIN_RECEP_F2_2"/>
    <property type="match status" value="1"/>
</dbReference>
<dbReference type="PROSITE" id="PS50261">
    <property type="entry name" value="G_PROTEIN_RECEP_F2_4"/>
    <property type="match status" value="1"/>
</dbReference>
<dbReference type="PROSITE" id="PS50221">
    <property type="entry name" value="GAIN_B"/>
    <property type="match status" value="1"/>
</dbReference>
<keyword id="KW-1064">Adaptive immunity</keyword>
<keyword id="KW-0025">Alternative splicing</keyword>
<keyword id="KW-0106">Calcium</keyword>
<keyword id="KW-1003">Cell membrane</keyword>
<keyword id="KW-1015">Disulfide bond</keyword>
<keyword id="KW-0245">EGF-like domain</keyword>
<keyword id="KW-0297">G-protein coupled receptor</keyword>
<keyword id="KW-0325">Glycoprotein</keyword>
<keyword id="KW-0391">Immunity</keyword>
<keyword id="KW-0472">Membrane</keyword>
<keyword id="KW-1267">Proteomics identification</keyword>
<keyword id="KW-0675">Receptor</keyword>
<keyword id="KW-1185">Reference proteome</keyword>
<keyword id="KW-0677">Repeat</keyword>
<keyword id="KW-0732">Signal</keyword>
<keyword id="KW-0807">Transducer</keyword>
<keyword id="KW-0812">Transmembrane</keyword>
<keyword id="KW-1133">Transmembrane helix</keyword>
<name>AGRE1_HUMAN</name>
<reference key="1">
    <citation type="journal article" date="1995" name="Genomics">
        <title>EMR1, an unusual member in the family of hormone receptors with seven transmembrane segments.</title>
        <authorList>
            <person name="Baud V."/>
            <person name="Chissoe S.L."/>
            <person name="Viegas-Pequignot E."/>
            <person name="Diriong S."/>
            <person name="N'Guyen V.C."/>
            <person name="Roe B.A."/>
            <person name="Lipinski M."/>
        </authorList>
    </citation>
    <scope>NUCLEOTIDE SEQUENCE [MRNA] (ISOFORM 1)</scope>
    <scope>VARIANTS THR-57; ARG-140; ASN-174; SER-254; VAL-298; MET-389; VAL-424; GLN-496; VAL-539 AND THR-663</scope>
</reference>
<reference key="2">
    <citation type="submission" date="2001-07" db="EMBL/GenBank/DDBJ databases">
        <title>Genome-wide discovery and analysis of human seven transmembrane helix receptor genes.</title>
        <authorList>
            <person name="Suwa M."/>
            <person name="Sato T."/>
            <person name="Okouchi I."/>
            <person name="Arita M."/>
            <person name="Futami K."/>
            <person name="Matsumoto S."/>
            <person name="Tsutsumi S."/>
            <person name="Aburatani H."/>
            <person name="Asai K."/>
            <person name="Akiyama Y."/>
        </authorList>
    </citation>
    <scope>NUCLEOTIDE SEQUENCE [GENOMIC DNA]</scope>
    <scope>VARIANTS VAL-424; GLN-496 AND VAL-539</scope>
</reference>
<reference key="3">
    <citation type="submission" date="2005-09" db="EMBL/GenBank/DDBJ databases">
        <title>Genetic variation in EMR1 gene.</title>
        <authorList>
            <person name="Tan J."/>
            <person name="Davila S."/>
            <person name="Hibberd M.L."/>
            <person name="Seielstad M."/>
        </authorList>
    </citation>
    <scope>NUCLEOTIDE SEQUENCE [GENOMIC DNA]</scope>
</reference>
<reference key="4">
    <citation type="journal article" date="2004" name="Nat. Genet.">
        <title>Complete sequencing and characterization of 21,243 full-length human cDNAs.</title>
        <authorList>
            <person name="Ota T."/>
            <person name="Suzuki Y."/>
            <person name="Nishikawa T."/>
            <person name="Otsuki T."/>
            <person name="Sugiyama T."/>
            <person name="Irie R."/>
            <person name="Wakamatsu A."/>
            <person name="Hayashi K."/>
            <person name="Sato H."/>
            <person name="Nagai K."/>
            <person name="Kimura K."/>
            <person name="Makita H."/>
            <person name="Sekine M."/>
            <person name="Obayashi M."/>
            <person name="Nishi T."/>
            <person name="Shibahara T."/>
            <person name="Tanaka T."/>
            <person name="Ishii S."/>
            <person name="Yamamoto J."/>
            <person name="Saito K."/>
            <person name="Kawai Y."/>
            <person name="Isono Y."/>
            <person name="Nakamura Y."/>
            <person name="Nagahari K."/>
            <person name="Murakami K."/>
            <person name="Yasuda T."/>
            <person name="Iwayanagi T."/>
            <person name="Wagatsuma M."/>
            <person name="Shiratori A."/>
            <person name="Sudo H."/>
            <person name="Hosoiri T."/>
            <person name="Kaku Y."/>
            <person name="Kodaira H."/>
            <person name="Kondo H."/>
            <person name="Sugawara M."/>
            <person name="Takahashi M."/>
            <person name="Kanda K."/>
            <person name="Yokoi T."/>
            <person name="Furuya T."/>
            <person name="Kikkawa E."/>
            <person name="Omura Y."/>
            <person name="Abe K."/>
            <person name="Kamihara K."/>
            <person name="Katsuta N."/>
            <person name="Sato K."/>
            <person name="Tanikawa M."/>
            <person name="Yamazaki M."/>
            <person name="Ninomiya K."/>
            <person name="Ishibashi T."/>
            <person name="Yamashita H."/>
            <person name="Murakawa K."/>
            <person name="Fujimori K."/>
            <person name="Tanai H."/>
            <person name="Kimata M."/>
            <person name="Watanabe M."/>
            <person name="Hiraoka S."/>
            <person name="Chiba Y."/>
            <person name="Ishida S."/>
            <person name="Ono Y."/>
            <person name="Takiguchi S."/>
            <person name="Watanabe S."/>
            <person name="Yosida M."/>
            <person name="Hotuta T."/>
            <person name="Kusano J."/>
            <person name="Kanehori K."/>
            <person name="Takahashi-Fujii A."/>
            <person name="Hara H."/>
            <person name="Tanase T.-O."/>
            <person name="Nomura Y."/>
            <person name="Togiya S."/>
            <person name="Komai F."/>
            <person name="Hara R."/>
            <person name="Takeuchi K."/>
            <person name="Arita M."/>
            <person name="Imose N."/>
            <person name="Musashino K."/>
            <person name="Yuuki H."/>
            <person name="Oshima A."/>
            <person name="Sasaki N."/>
            <person name="Aotsuka S."/>
            <person name="Yoshikawa Y."/>
            <person name="Matsunawa H."/>
            <person name="Ichihara T."/>
            <person name="Shiohata N."/>
            <person name="Sano S."/>
            <person name="Moriya S."/>
            <person name="Momiyama H."/>
            <person name="Satoh N."/>
            <person name="Takami S."/>
            <person name="Terashima Y."/>
            <person name="Suzuki O."/>
            <person name="Nakagawa S."/>
            <person name="Senoh A."/>
            <person name="Mizoguchi H."/>
            <person name="Goto Y."/>
            <person name="Shimizu F."/>
            <person name="Wakebe H."/>
            <person name="Hishigaki H."/>
            <person name="Watanabe T."/>
            <person name="Sugiyama A."/>
            <person name="Takemoto M."/>
            <person name="Kawakami B."/>
            <person name="Yamazaki M."/>
            <person name="Watanabe K."/>
            <person name="Kumagai A."/>
            <person name="Itakura S."/>
            <person name="Fukuzumi Y."/>
            <person name="Fujimori Y."/>
            <person name="Komiyama M."/>
            <person name="Tashiro H."/>
            <person name="Tanigami A."/>
            <person name="Fujiwara T."/>
            <person name="Ono T."/>
            <person name="Yamada K."/>
            <person name="Fujii Y."/>
            <person name="Ozaki K."/>
            <person name="Hirao M."/>
            <person name="Ohmori Y."/>
            <person name="Kawabata A."/>
            <person name="Hikiji T."/>
            <person name="Kobatake N."/>
            <person name="Inagaki H."/>
            <person name="Ikema Y."/>
            <person name="Okamoto S."/>
            <person name="Okitani R."/>
            <person name="Kawakami T."/>
            <person name="Noguchi S."/>
            <person name="Itoh T."/>
            <person name="Shigeta K."/>
            <person name="Senba T."/>
            <person name="Matsumura K."/>
            <person name="Nakajima Y."/>
            <person name="Mizuno T."/>
            <person name="Morinaga M."/>
            <person name="Sasaki M."/>
            <person name="Togashi T."/>
            <person name="Oyama M."/>
            <person name="Hata H."/>
            <person name="Watanabe M."/>
            <person name="Komatsu T."/>
            <person name="Mizushima-Sugano J."/>
            <person name="Satoh T."/>
            <person name="Shirai Y."/>
            <person name="Takahashi Y."/>
            <person name="Nakagawa K."/>
            <person name="Okumura K."/>
            <person name="Nagase T."/>
            <person name="Nomura N."/>
            <person name="Kikuchi H."/>
            <person name="Masuho Y."/>
            <person name="Yamashita R."/>
            <person name="Nakai K."/>
            <person name="Yada T."/>
            <person name="Nakamura Y."/>
            <person name="Ohara O."/>
            <person name="Isogai T."/>
            <person name="Sugano S."/>
        </authorList>
    </citation>
    <scope>NUCLEOTIDE SEQUENCE [LARGE SCALE MRNA] (ISOFORMS 3; 4 AND 5)</scope>
    <scope>VARIANTS THR-57; VAL-424; GLN-496; VAL-539 AND ILE-589</scope>
    <source>
        <tissue>Thymus</tissue>
        <tissue>Umbilical cord blood</tissue>
    </source>
</reference>
<reference key="5">
    <citation type="journal article" date="2004" name="Nature">
        <title>The DNA sequence and biology of human chromosome 19.</title>
        <authorList>
            <person name="Grimwood J."/>
            <person name="Gordon L.A."/>
            <person name="Olsen A.S."/>
            <person name="Terry A."/>
            <person name="Schmutz J."/>
            <person name="Lamerdin J.E."/>
            <person name="Hellsten U."/>
            <person name="Goodstein D."/>
            <person name="Couronne O."/>
            <person name="Tran-Gyamfi M."/>
            <person name="Aerts A."/>
            <person name="Altherr M."/>
            <person name="Ashworth L."/>
            <person name="Bajorek E."/>
            <person name="Black S."/>
            <person name="Branscomb E."/>
            <person name="Caenepeel S."/>
            <person name="Carrano A.V."/>
            <person name="Caoile C."/>
            <person name="Chan Y.M."/>
            <person name="Christensen M."/>
            <person name="Cleland C.A."/>
            <person name="Copeland A."/>
            <person name="Dalin E."/>
            <person name="Dehal P."/>
            <person name="Denys M."/>
            <person name="Detter J.C."/>
            <person name="Escobar J."/>
            <person name="Flowers D."/>
            <person name="Fotopulos D."/>
            <person name="Garcia C."/>
            <person name="Georgescu A.M."/>
            <person name="Glavina T."/>
            <person name="Gomez M."/>
            <person name="Gonzales E."/>
            <person name="Groza M."/>
            <person name="Hammon N."/>
            <person name="Hawkins T."/>
            <person name="Haydu L."/>
            <person name="Ho I."/>
            <person name="Huang W."/>
            <person name="Israni S."/>
            <person name="Jett J."/>
            <person name="Kadner K."/>
            <person name="Kimball H."/>
            <person name="Kobayashi A."/>
            <person name="Larionov V."/>
            <person name="Leem S.-H."/>
            <person name="Lopez F."/>
            <person name="Lou Y."/>
            <person name="Lowry S."/>
            <person name="Malfatti S."/>
            <person name="Martinez D."/>
            <person name="McCready P.M."/>
            <person name="Medina C."/>
            <person name="Morgan J."/>
            <person name="Nelson K."/>
            <person name="Nolan M."/>
            <person name="Ovcharenko I."/>
            <person name="Pitluck S."/>
            <person name="Pollard M."/>
            <person name="Popkie A.P."/>
            <person name="Predki P."/>
            <person name="Quan G."/>
            <person name="Ramirez L."/>
            <person name="Rash S."/>
            <person name="Retterer J."/>
            <person name="Rodriguez A."/>
            <person name="Rogers S."/>
            <person name="Salamov A."/>
            <person name="Salazar A."/>
            <person name="She X."/>
            <person name="Smith D."/>
            <person name="Slezak T."/>
            <person name="Solovyev V."/>
            <person name="Thayer N."/>
            <person name="Tice H."/>
            <person name="Tsai M."/>
            <person name="Ustaszewska A."/>
            <person name="Vo N."/>
            <person name="Wagner M."/>
            <person name="Wheeler J."/>
            <person name="Wu K."/>
            <person name="Xie G."/>
            <person name="Yang J."/>
            <person name="Dubchak I."/>
            <person name="Furey T.S."/>
            <person name="DeJong P."/>
            <person name="Dickson M."/>
            <person name="Gordon D."/>
            <person name="Eichler E.E."/>
            <person name="Pennacchio L.A."/>
            <person name="Richardson P."/>
            <person name="Stubbs L."/>
            <person name="Rokhsar D.S."/>
            <person name="Myers R.M."/>
            <person name="Rubin E.M."/>
            <person name="Lucas S.M."/>
        </authorList>
    </citation>
    <scope>NUCLEOTIDE SEQUENCE [LARGE SCALE GENOMIC DNA]</scope>
</reference>
<reference key="6">
    <citation type="journal article" date="2004" name="Genome Res.">
        <title>The status, quality, and expansion of the NIH full-length cDNA project: the Mammalian Gene Collection (MGC).</title>
        <authorList>
            <consortium name="The MGC Project Team"/>
        </authorList>
    </citation>
    <scope>NUCLEOTIDE SEQUENCE [LARGE SCALE MRNA] (ISOFORM 2)</scope>
    <scope>VARIANT ILE-589</scope>
    <source>
        <tissue>Placenta</tissue>
    </source>
</reference>
<reference key="7">
    <citation type="journal article" date="2007" name="Eur. J. Immunol.">
        <title>EMR1, the human homolog of F4/80, is an eosinophil-specific receptor.</title>
        <authorList>
            <person name="Hamann J."/>
            <person name="Koning N."/>
            <person name="Pouwels W."/>
            <person name="Ulfman L.H."/>
            <person name="van Eijk M."/>
            <person name="Stacey M."/>
            <person name="Lin H.H."/>
            <person name="Gordon S."/>
            <person name="Kwakkenbos M.J."/>
        </authorList>
    </citation>
    <scope>TISSUE SPECIFICITY</scope>
</reference>
<reference key="8">
    <citation type="journal article" date="2014" name="J. Allergy Clin. Immunol.">
        <title>The eosinophil surface receptor epidermal growth factor-like module containing mucin-like hormone receptor 1 (EMR1): a novel therapeutic target for eosinophilic disorders.</title>
        <authorList>
            <person name="Legrand F."/>
            <person name="Tomasevic N."/>
            <person name="Simakova O."/>
            <person name="Lee C.C."/>
            <person name="Wang Z."/>
            <person name="Raffeld M."/>
            <person name="Makiya M.A."/>
            <person name="Palath V."/>
            <person name="Leung J."/>
            <person name="Baer M."/>
            <person name="Yarranton G."/>
            <person name="Maric I."/>
            <person name="Bebbington C."/>
            <person name="Klion A.D."/>
        </authorList>
    </citation>
    <scope>TISSUE SPECIFICITY</scope>
    <scope>SUBCELLULAR LOCATION</scope>
</reference>
<reference key="9">
    <citation type="journal article" date="2015" name="Pharmacol. Rev.">
        <title>International union of basic and clinical pharmacology. XCIV. Adhesion G protein-coupled receptors.</title>
        <authorList>
            <person name="Hamann J."/>
            <person name="Aust G."/>
            <person name="Arac D."/>
            <person name="Engel F.B."/>
            <person name="Formstone C."/>
            <person name="Fredriksson R."/>
            <person name="Hall R.A."/>
            <person name="Harty B.L."/>
            <person name="Kirchhoff C."/>
            <person name="Knapp B."/>
            <person name="Krishnan A."/>
            <person name="Liebscher I."/>
            <person name="Lin H.H."/>
            <person name="Martinelli D.C."/>
            <person name="Monk K.R."/>
            <person name="Peeters M.C."/>
            <person name="Piao X."/>
            <person name="Promel S."/>
            <person name="Schoneberg T."/>
            <person name="Schwartz T.W."/>
            <person name="Singer K."/>
            <person name="Stacey M."/>
            <person name="Ushkaryov Y.A."/>
            <person name="Vallon M."/>
            <person name="Wolfrum U."/>
            <person name="Wright M.W."/>
            <person name="Xu L."/>
            <person name="Langenhan T."/>
            <person name="Schioth H.B."/>
        </authorList>
    </citation>
    <scope>NOMENCLATURE</scope>
</reference>
<accession>Q14246</accession>
<accession>A6NHV2</accession>
<accession>B7Z486</accession>
<accession>B7Z489</accession>
<accession>E7EPX9</accession>
<accession>E9PD45</accession>
<accession>H9KV79</accession>
<accession>Q2I7G5</accession>
<accession>Q6ZMN0</accession>
<accession>Q8NGA7</accession>
<gene>
    <name evidence="16" type="primary">ADGRE1</name>
    <name type="synonym">EMR1</name>
    <name type="synonym">TM7LN3</name>
</gene>
<feature type="signal peptide" evidence="2">
    <location>
        <begin position="1"/>
        <end position="20"/>
    </location>
</feature>
<feature type="chain" id="PRO_0000012873" description="Adhesion G protein-coupled receptor E1">
    <location>
        <begin position="21"/>
        <end position="886"/>
    </location>
</feature>
<feature type="topological domain" description="Extracellular" evidence="15">
    <location>
        <begin position="21"/>
        <end position="599"/>
    </location>
</feature>
<feature type="transmembrane region" description="Helical; Name=1" evidence="2">
    <location>
        <begin position="600"/>
        <end position="627"/>
    </location>
</feature>
<feature type="topological domain" description="Cytoplasmic" evidence="15">
    <location>
        <begin position="628"/>
        <end position="634"/>
    </location>
</feature>
<feature type="transmembrane region" description="Helical; Name=2" evidence="2">
    <location>
        <begin position="635"/>
        <end position="656"/>
    </location>
</feature>
<feature type="topological domain" description="Extracellular" evidence="15">
    <location>
        <begin position="657"/>
        <end position="666"/>
    </location>
</feature>
<feature type="transmembrane region" description="Helical; Name=3" evidence="2">
    <location>
        <begin position="667"/>
        <end position="690"/>
    </location>
</feature>
<feature type="topological domain" description="Cytoplasmic" evidence="15">
    <location>
        <begin position="691"/>
        <end position="709"/>
    </location>
</feature>
<feature type="transmembrane region" description="Helical; Name=4" evidence="2">
    <location>
        <begin position="710"/>
        <end position="731"/>
    </location>
</feature>
<feature type="topological domain" description="Extracellular" evidence="15">
    <location>
        <begin position="732"/>
        <end position="747"/>
    </location>
</feature>
<feature type="transmembrane region" description="Helical; Name=5" evidence="2">
    <location>
        <begin position="748"/>
        <end position="776"/>
    </location>
</feature>
<feature type="topological domain" description="Cytoplasmic" evidence="15">
    <location>
        <begin position="777"/>
        <end position="794"/>
    </location>
</feature>
<feature type="transmembrane region" description="Helical; Name=6" evidence="2">
    <location>
        <begin position="795"/>
        <end position="814"/>
    </location>
</feature>
<feature type="topological domain" description="Extracellular" evidence="15">
    <location>
        <begin position="815"/>
        <end position="829"/>
    </location>
</feature>
<feature type="transmembrane region" description="Helical; Name=7" evidence="2">
    <location>
        <begin position="830"/>
        <end position="852"/>
    </location>
</feature>
<feature type="topological domain" description="Cytoplasmic" evidence="15">
    <location>
        <begin position="853"/>
        <end position="886"/>
    </location>
</feature>
<feature type="domain" description="EGF-like 1" evidence="3">
    <location>
        <begin position="31"/>
        <end position="79"/>
    </location>
</feature>
<feature type="domain" description="EGF-like 2; calcium-binding" evidence="3">
    <location>
        <begin position="80"/>
        <end position="131"/>
    </location>
</feature>
<feature type="domain" description="EGF-like 3; calcium-binding" evidence="3">
    <location>
        <begin position="132"/>
        <end position="171"/>
    </location>
</feature>
<feature type="domain" description="EGF-like 4; calcium-binding" evidence="3">
    <location>
        <begin position="172"/>
        <end position="220"/>
    </location>
</feature>
<feature type="domain" description="EGF-like 5; calcium-binding" evidence="3">
    <location>
        <begin position="221"/>
        <end position="267"/>
    </location>
</feature>
<feature type="domain" description="EGF-like 6; calcium-binding" evidence="3">
    <location>
        <begin position="268"/>
        <end position="316"/>
    </location>
</feature>
<feature type="domain" description="GAIN-B" evidence="4">
    <location>
        <begin position="431"/>
        <end position="597"/>
    </location>
</feature>
<feature type="region of interest" description="GPS" evidence="4">
    <location>
        <begin position="550"/>
        <end position="597"/>
    </location>
</feature>
<feature type="region of interest" description="Disordered" evidence="5">
    <location>
        <begin position="862"/>
        <end position="886"/>
    </location>
</feature>
<feature type="compositionally biased region" description="Polar residues" evidence="5">
    <location>
        <begin position="863"/>
        <end position="886"/>
    </location>
</feature>
<feature type="glycosylation site" description="N-linked (GlcNAc...) asparagine" evidence="2">
    <location>
        <position position="94"/>
    </location>
</feature>
<feature type="glycosylation site" description="N-linked (GlcNAc...) asparagine" evidence="2">
    <location>
        <position position="99"/>
    </location>
</feature>
<feature type="glycosylation site" description="N-linked (GlcNAc...) asparagine" evidence="2">
    <location>
        <position position="127"/>
    </location>
</feature>
<feature type="glycosylation site" description="N-linked (GlcNAc...) asparagine" evidence="2">
    <location>
        <position position="167"/>
    </location>
</feature>
<feature type="glycosylation site" description="N-linked (GlcNAc...) asparagine" evidence="2">
    <location>
        <position position="189"/>
    </location>
</feature>
<feature type="glycosylation site" description="N-linked (GlcNAc...) asparagine" evidence="2">
    <location>
        <position position="194"/>
    </location>
</feature>
<feature type="glycosylation site" description="N-linked (GlcNAc...) asparagine" evidence="2">
    <location>
        <position position="232"/>
    </location>
</feature>
<feature type="glycosylation site" description="N-linked (GlcNAc...) asparagine" evidence="2">
    <location>
        <position position="258"/>
    </location>
</feature>
<feature type="glycosylation site" description="N-linked (GlcNAc...) asparagine" evidence="2">
    <location>
        <position position="312"/>
    </location>
</feature>
<feature type="glycosylation site" description="N-linked (GlcNAc...) asparagine" evidence="2">
    <location>
        <position position="366"/>
    </location>
</feature>
<feature type="glycosylation site" description="N-linked (GlcNAc...) asparagine" evidence="2">
    <location>
        <position position="375"/>
    </location>
</feature>
<feature type="glycosylation site" description="N-linked (GlcNAc...) asparagine" evidence="2">
    <location>
        <position position="448"/>
    </location>
</feature>
<feature type="disulfide bond" evidence="3">
    <location>
        <begin position="35"/>
        <end position="47"/>
    </location>
</feature>
<feature type="disulfide bond" evidence="3">
    <location>
        <begin position="41"/>
        <end position="56"/>
    </location>
</feature>
<feature type="disulfide bond" evidence="3">
    <location>
        <begin position="58"/>
        <end position="78"/>
    </location>
</feature>
<feature type="disulfide bond" evidence="3">
    <location>
        <begin position="84"/>
        <end position="97"/>
    </location>
</feature>
<feature type="disulfide bond" evidence="3">
    <location>
        <begin position="91"/>
        <end position="106"/>
    </location>
</feature>
<feature type="disulfide bond" evidence="3">
    <location>
        <begin position="108"/>
        <end position="130"/>
    </location>
</feature>
<feature type="disulfide bond" evidence="3">
    <location>
        <begin position="136"/>
        <end position="148"/>
    </location>
</feature>
<feature type="disulfide bond" evidence="3">
    <location>
        <begin position="142"/>
        <end position="157"/>
    </location>
</feature>
<feature type="disulfide bond" evidence="3">
    <location>
        <begin position="159"/>
        <end position="170"/>
    </location>
</feature>
<feature type="disulfide bond" evidence="3">
    <location>
        <begin position="176"/>
        <end position="188"/>
    </location>
</feature>
<feature type="disulfide bond" evidence="3">
    <location>
        <begin position="182"/>
        <end position="197"/>
    </location>
</feature>
<feature type="disulfide bond" evidence="3">
    <location>
        <begin position="199"/>
        <end position="219"/>
    </location>
</feature>
<feature type="disulfide bond" evidence="3">
    <location>
        <begin position="225"/>
        <end position="235"/>
    </location>
</feature>
<feature type="disulfide bond" evidence="3">
    <location>
        <begin position="229"/>
        <end position="244"/>
    </location>
</feature>
<feature type="disulfide bond" evidence="3">
    <location>
        <begin position="246"/>
        <end position="266"/>
    </location>
</feature>
<feature type="disulfide bond" evidence="3">
    <location>
        <begin position="272"/>
        <end position="285"/>
    </location>
</feature>
<feature type="disulfide bond" evidence="3">
    <location>
        <begin position="279"/>
        <end position="294"/>
    </location>
</feature>
<feature type="disulfide bond" evidence="3">
    <location>
        <begin position="296"/>
        <end position="315"/>
    </location>
</feature>
<feature type="disulfide bond" evidence="4">
    <location>
        <begin position="550"/>
        <end position="579"/>
    </location>
</feature>
<feature type="disulfide bond" evidence="4">
    <location>
        <begin position="567"/>
        <end position="581"/>
    </location>
</feature>
<feature type="splice variant" id="VSP_045521" description="In isoform 3 and isoform 5." evidence="12">
    <location>
        <begin position="80"/>
        <end position="131"/>
    </location>
</feature>
<feature type="splice variant" id="VSP_045522" description="In isoform 5." evidence="12">
    <location>
        <begin position="132"/>
        <end position="220"/>
    </location>
</feature>
<feature type="splice variant" id="VSP_045523" description="In isoform 4." evidence="12">
    <location>
        <begin position="140"/>
        <end position="316"/>
    </location>
</feature>
<feature type="splice variant" id="VSP_009594" description="In isoform 2." evidence="13">
    <location>
        <begin position="599"/>
        <end position="663"/>
    </location>
</feature>
<feature type="splice variant" id="VSP_045524" description="In isoform 3." evidence="12">
    <original>I</original>
    <variation>VSKYYNSLAKCVLKEEQGDLRDLEFPGTCAAERI</variation>
    <location>
        <position position="764"/>
    </location>
</feature>
<feature type="sequence variant" id="VAR_046976" description="In dbSNP:rs34176643.">
    <original>R</original>
    <variation>L</variation>
    <location>
        <position position="2"/>
    </location>
</feature>
<feature type="sequence variant" id="VAR_027616" description="In dbSNP:rs330877." evidence="6 10">
    <original>A</original>
    <variation>T</variation>
    <location>
        <position position="57"/>
    </location>
</feature>
<feature type="sequence variant" id="VAR_027617" description="In dbSNP:rs330880." evidence="10">
    <original>S</original>
    <variation>R</variation>
    <location>
        <position position="140"/>
    </location>
</feature>
<feature type="sequence variant" id="VAR_027618" description="In dbSNP:rs897738." evidence="10">
    <original>D</original>
    <variation>N</variation>
    <location>
        <position position="174"/>
    </location>
</feature>
<feature type="sequence variant" id="VAR_027619" description="In dbSNP:rs443658." evidence="10">
    <original>N</original>
    <variation>S</variation>
    <location>
        <position position="254"/>
    </location>
</feature>
<feature type="sequence variant" id="VAR_027620" description="In dbSNP:rs370094." evidence="10">
    <original>A</original>
    <variation>V</variation>
    <location>
        <position position="298"/>
    </location>
</feature>
<feature type="sequence variant" id="VAR_027621" description="In dbSNP:rs466876." evidence="10">
    <original>T</original>
    <variation>M</variation>
    <location>
        <position position="389"/>
    </location>
</feature>
<feature type="sequence variant" id="VAR_027622" description="In dbSNP:rs457857." evidence="6 10 11">
    <original>I</original>
    <variation>V</variation>
    <location>
        <position position="424"/>
    </location>
</feature>
<feature type="sequence variant" id="VAR_027623" description="In dbSNP:rs373533." evidence="6 10 11">
    <original>K</original>
    <variation>Q</variation>
    <location>
        <position position="496"/>
    </location>
</feature>
<feature type="sequence variant" id="VAR_027624" description="In dbSNP:rs461645." evidence="6 10 11">
    <original>I</original>
    <variation>V</variation>
    <location>
        <position position="539"/>
    </location>
</feature>
<feature type="sequence variant" id="VAR_027625" description="In dbSNP:rs7256147." evidence="6 7">
    <original>V</original>
    <variation>I</variation>
    <location>
        <position position="589"/>
    </location>
</feature>
<feature type="sequence variant" id="VAR_046977" description="In dbSNP:rs2228539." evidence="10">
    <original>M</original>
    <variation>T</variation>
    <location>
        <position position="663"/>
    </location>
</feature>
<feature type="sequence variant" id="VAR_027626" description="In dbSNP:rs2229769.">
    <original>F</original>
    <variation>C</variation>
    <location>
        <position position="691"/>
    </location>
</feature>
<feature type="sequence variant" id="VAR_027627" description="In dbSNP:rs10406580.">
    <original>V</original>
    <variation>L</variation>
    <location>
        <position position="724"/>
    </location>
</feature>
<feature type="sequence conflict" description="In Ref. 4; BAH12472." evidence="15" ref="4">
    <original>G</original>
    <variation>R</variation>
    <location>
        <position position="61"/>
    </location>
</feature>
<feature type="sequence conflict" description="In Ref. 1; CAA57232." evidence="15" ref="1">
    <original>F</original>
    <variation>C</variation>
    <location>
        <position position="212"/>
    </location>
</feature>
<feature type="sequence conflict" description="In Ref. 4; BAH12475." evidence="15" ref="4">
    <original>I</original>
    <variation>A</variation>
    <location>
        <position position="424"/>
    </location>
</feature>
<feature type="sequence conflict" description="In Ref. 1; CAA57232." evidence="15" ref="1">
    <original>T</original>
    <variation>A</variation>
    <location>
        <position position="430"/>
    </location>
</feature>
<feature type="sequence conflict" description="In Ref. 4; BAH12475." evidence="15" ref="4">
    <original>F</original>
    <variation>L</variation>
    <location>
        <position position="545"/>
    </location>
</feature>
<protein>
    <recommendedName>
        <fullName evidence="14">Adhesion G protein-coupled receptor E1</fullName>
    </recommendedName>
    <alternativeName>
        <fullName>EGF-like module receptor 1</fullName>
    </alternativeName>
    <alternativeName>
        <fullName>EGF-like module-containing mucin-like hormone receptor-like 1</fullName>
    </alternativeName>
    <alternativeName>
        <fullName>EMR1 hormone receptor</fullName>
    </alternativeName>
</protein>
<sequence>MRGFNLLLFWGCCVMHSWEGHIRPTRKPNTKGNNCRDSTLCPAYATCTNTVDSYYCACKQGFLSSNGQNHFKDPGVRCKDIDECSQSPQPCGPNSSCKNLSGRYKCSCLDGFSSPTGNDWVPGKPGNFSCTDINECLTSSVCPEHSDCVNSMGSYSCSCQVGFISRNSTCEDVDECADPRACPEHATCNNTVGNYSCFCNPGFESSSGHLSFQGLKASCEDIDECTEMCPINSTCTNTPGSYFCTCHPGFAPSNGQLNFTDQGVECRDIDECRQDPSTCGPNSICTNALGSYSCGCIAGFHPNPEGSQKDGNFSCQRVLFKCKEDVIPDNKQIQQCQEGTAVKPAYVSFCAQINNIFSVLDKVCENKTTVVSLKNTTESFVPVLKQISTWTKFTKEETSSLATVFLESVESMTLASFWKPSANITPAVRTEYLDIESKVINKECSEENVTLDLVAKGDKMKIGCSTIEESESTETTGVAFVSFVGMESVLNERFFKDHQAPLTTSEIKLKMNSRVVGGIMTGEKKDGFSDPIIYTLENIQPKQKFERPICVSWSTDVKGGRWTSFGCVILEASETYTICSCNQMANLAVIMASGELTMDFSLYIISHVGIIISLVCLVLAIATFLLCRSIRNHNTYLHLHLCVCLLLAKTLFLAGIHKTDNKMGCAIIAGFLHYLFLACFFWMLVEAVILFLMVRNLKVVNYFSSRNIKMLHICAFGYGLPMLVVVISASVQPQGYGMHNRCWLNTETGFIWSFLGPVCTVIVINSLLLTWTLWILRQRLSSVNAEVSTLKDTRLLTFKAFAQLFILGCSWVLGIFQIGPVAGVMAYLFTIINSLQGAFIFLIHCLLNGQVREEYKRWITGKTKPSSQSQTSRILLSSMPSASKTG</sequence>
<organism>
    <name type="scientific">Homo sapiens</name>
    <name type="common">Human</name>
    <dbReference type="NCBI Taxonomy" id="9606"/>
    <lineage>
        <taxon>Eukaryota</taxon>
        <taxon>Metazoa</taxon>
        <taxon>Chordata</taxon>
        <taxon>Craniata</taxon>
        <taxon>Vertebrata</taxon>
        <taxon>Euteleostomi</taxon>
        <taxon>Mammalia</taxon>
        <taxon>Eutheria</taxon>
        <taxon>Euarchontoglires</taxon>
        <taxon>Primates</taxon>
        <taxon>Haplorrhini</taxon>
        <taxon>Catarrhini</taxon>
        <taxon>Hominidae</taxon>
        <taxon>Homo</taxon>
    </lineage>
</organism>
<evidence type="ECO:0000250" key="1">
    <source>
        <dbReference type="UniProtKB" id="Q61549"/>
    </source>
</evidence>
<evidence type="ECO:0000255" key="2"/>
<evidence type="ECO:0000255" key="3">
    <source>
        <dbReference type="PROSITE-ProRule" id="PRU00076"/>
    </source>
</evidence>
<evidence type="ECO:0000255" key="4">
    <source>
        <dbReference type="PROSITE-ProRule" id="PRU00098"/>
    </source>
</evidence>
<evidence type="ECO:0000256" key="5">
    <source>
        <dbReference type="SAM" id="MobiDB-lite"/>
    </source>
</evidence>
<evidence type="ECO:0000269" key="6">
    <source>
    </source>
</evidence>
<evidence type="ECO:0000269" key="7">
    <source>
    </source>
</evidence>
<evidence type="ECO:0000269" key="8">
    <source>
    </source>
</evidence>
<evidence type="ECO:0000269" key="9">
    <source>
    </source>
</evidence>
<evidence type="ECO:0000269" key="10">
    <source>
    </source>
</evidence>
<evidence type="ECO:0000269" key="11">
    <source ref="2"/>
</evidence>
<evidence type="ECO:0000303" key="12">
    <source>
    </source>
</evidence>
<evidence type="ECO:0000303" key="13">
    <source>
    </source>
</evidence>
<evidence type="ECO:0000303" key="14">
    <source>
    </source>
</evidence>
<evidence type="ECO:0000305" key="15"/>
<evidence type="ECO:0000312" key="16">
    <source>
        <dbReference type="HGNC" id="HGNC:3336"/>
    </source>
</evidence>
<proteinExistence type="evidence at protein level"/>